<sequence>MTNSVFQGRSFLAEKDFTRAELEYLIGLSAHLKDLKKRNIQHHYLAGKNIALLFEKTSTRTRAAFTTAAIDLGAHPEYLGANDIQLGKKESTEDTAKVLGRMFDGIEFRGFSQRMVEELAEFSGVPVWNGLTDEWHPTQMLADYLTVQENFGRLEGLTLVYCGDGRNNVANSLLVTGAILGVNVHIFSPKELFPEKEIVELAEGFAKESGAHVLITEDADEAVKDADVLYTDVWVSMGEEDKFAERVALLKPYQVNMDLVKKAGNENLIFLHCLPAFHDTHTVYGKDVAEKFGVEEMEVTDEVFRSKYARHFDQAENRMHTIKAVMAATLGNLYIPKV</sequence>
<accession>P65607</accession>
<accession>Q8DN29</accession>
<accession>Q97NA3</accession>
<name>OTCC_STRPN</name>
<gene>
    <name evidence="2" type="primary">arcB</name>
    <name type="ordered locus">SP_2150</name>
</gene>
<dbReference type="EC" id="2.1.3.3" evidence="2"/>
<dbReference type="EMBL" id="AE005672">
    <property type="protein sequence ID" value="AAK76206.1"/>
    <property type="molecule type" value="Genomic_DNA"/>
</dbReference>
<dbReference type="PIR" id="E95251">
    <property type="entry name" value="E95251"/>
</dbReference>
<dbReference type="SMR" id="P65607"/>
<dbReference type="PaxDb" id="170187-SP_2150"/>
<dbReference type="EnsemblBacteria" id="AAK76206">
    <property type="protein sequence ID" value="AAK76206"/>
    <property type="gene ID" value="SP_2150"/>
</dbReference>
<dbReference type="KEGG" id="spn:SP_2150"/>
<dbReference type="eggNOG" id="COG0078">
    <property type="taxonomic scope" value="Bacteria"/>
</dbReference>
<dbReference type="PhylomeDB" id="P65607"/>
<dbReference type="BioCyc" id="SPNE170187:G1FZB-2241-MONOMER"/>
<dbReference type="UniPathway" id="UPA00254">
    <property type="reaction ID" value="UER00365"/>
</dbReference>
<dbReference type="PHI-base" id="PHI:3474"/>
<dbReference type="Proteomes" id="UP000000585">
    <property type="component" value="Chromosome"/>
</dbReference>
<dbReference type="GO" id="GO:0005737">
    <property type="term" value="C:cytoplasm"/>
    <property type="evidence" value="ECO:0007669"/>
    <property type="project" value="UniProtKB-SubCell"/>
</dbReference>
<dbReference type="GO" id="GO:0016597">
    <property type="term" value="F:amino acid binding"/>
    <property type="evidence" value="ECO:0007669"/>
    <property type="project" value="InterPro"/>
</dbReference>
<dbReference type="GO" id="GO:0004585">
    <property type="term" value="F:ornithine carbamoyltransferase activity"/>
    <property type="evidence" value="ECO:0007669"/>
    <property type="project" value="UniProtKB-UniRule"/>
</dbReference>
<dbReference type="GO" id="GO:0042450">
    <property type="term" value="P:arginine biosynthetic process via ornithine"/>
    <property type="evidence" value="ECO:0007669"/>
    <property type="project" value="TreeGrafter"/>
</dbReference>
<dbReference type="GO" id="GO:0019547">
    <property type="term" value="P:arginine catabolic process to ornithine"/>
    <property type="evidence" value="ECO:0007669"/>
    <property type="project" value="UniProtKB-UniRule"/>
</dbReference>
<dbReference type="GO" id="GO:0019240">
    <property type="term" value="P:citrulline biosynthetic process"/>
    <property type="evidence" value="ECO:0007669"/>
    <property type="project" value="TreeGrafter"/>
</dbReference>
<dbReference type="FunFam" id="3.40.50.1370:FF:000004">
    <property type="entry name" value="Ornithine carbamoyltransferase"/>
    <property type="match status" value="1"/>
</dbReference>
<dbReference type="Gene3D" id="3.40.50.1370">
    <property type="entry name" value="Aspartate/ornithine carbamoyltransferase"/>
    <property type="match status" value="2"/>
</dbReference>
<dbReference type="HAMAP" id="MF_01109">
    <property type="entry name" value="OTCase"/>
    <property type="match status" value="1"/>
</dbReference>
<dbReference type="InterPro" id="IPR006132">
    <property type="entry name" value="Asp/Orn_carbamoyltranf_P-bd"/>
</dbReference>
<dbReference type="InterPro" id="IPR006130">
    <property type="entry name" value="Asp/Orn_carbamoylTrfase"/>
</dbReference>
<dbReference type="InterPro" id="IPR036901">
    <property type="entry name" value="Asp/Orn_carbamoylTrfase_sf"/>
</dbReference>
<dbReference type="InterPro" id="IPR006131">
    <property type="entry name" value="Asp_carbamoyltransf_Asp/Orn-bd"/>
</dbReference>
<dbReference type="InterPro" id="IPR002292">
    <property type="entry name" value="Orn/put_carbamltrans"/>
</dbReference>
<dbReference type="InterPro" id="IPR024904">
    <property type="entry name" value="OTCase_ArgI"/>
</dbReference>
<dbReference type="NCBIfam" id="TIGR00658">
    <property type="entry name" value="orni_carb_tr"/>
    <property type="match status" value="1"/>
</dbReference>
<dbReference type="NCBIfam" id="NF001986">
    <property type="entry name" value="PRK00779.1"/>
    <property type="match status" value="1"/>
</dbReference>
<dbReference type="PANTHER" id="PTHR45753:SF1">
    <property type="entry name" value="ORNITHINE CARBAMOYLTRANSFERASE, CATABOLIC"/>
    <property type="match status" value="1"/>
</dbReference>
<dbReference type="PANTHER" id="PTHR45753">
    <property type="entry name" value="ORNITHINE CARBAMOYLTRANSFERASE, MITOCHONDRIAL"/>
    <property type="match status" value="1"/>
</dbReference>
<dbReference type="Pfam" id="PF00185">
    <property type="entry name" value="OTCace"/>
    <property type="match status" value="1"/>
</dbReference>
<dbReference type="Pfam" id="PF02729">
    <property type="entry name" value="OTCace_N"/>
    <property type="match status" value="1"/>
</dbReference>
<dbReference type="PRINTS" id="PR00100">
    <property type="entry name" value="AOTCASE"/>
</dbReference>
<dbReference type="PRINTS" id="PR00102">
    <property type="entry name" value="OTCASE"/>
</dbReference>
<dbReference type="SUPFAM" id="SSF53671">
    <property type="entry name" value="Aspartate/ornithine carbamoyltransferase"/>
    <property type="match status" value="1"/>
</dbReference>
<dbReference type="PROSITE" id="PS00097">
    <property type="entry name" value="CARBAMOYLTRANSFERASE"/>
    <property type="match status" value="1"/>
</dbReference>
<feature type="chain" id="PRO_0000113035" description="Ornithine carbamoyltransferase, catabolic">
    <location>
        <begin position="1"/>
        <end position="338"/>
    </location>
</feature>
<feature type="binding site" evidence="2">
    <location>
        <begin position="58"/>
        <end position="61"/>
    </location>
    <ligand>
        <name>carbamoyl phosphate</name>
        <dbReference type="ChEBI" id="CHEBI:58228"/>
    </ligand>
</feature>
<feature type="binding site" evidence="2">
    <location>
        <position position="85"/>
    </location>
    <ligand>
        <name>carbamoyl phosphate</name>
        <dbReference type="ChEBI" id="CHEBI:58228"/>
    </ligand>
</feature>
<feature type="binding site" evidence="2">
    <location>
        <position position="109"/>
    </location>
    <ligand>
        <name>carbamoyl phosphate</name>
        <dbReference type="ChEBI" id="CHEBI:58228"/>
    </ligand>
</feature>
<feature type="binding site" evidence="2">
    <location>
        <begin position="136"/>
        <end position="139"/>
    </location>
    <ligand>
        <name>carbamoyl phosphate</name>
        <dbReference type="ChEBI" id="CHEBI:58228"/>
    </ligand>
</feature>
<feature type="binding site" evidence="2">
    <location>
        <position position="168"/>
    </location>
    <ligand>
        <name>L-ornithine</name>
        <dbReference type="ChEBI" id="CHEBI:46911"/>
    </ligand>
</feature>
<feature type="binding site" evidence="2">
    <location>
        <position position="232"/>
    </location>
    <ligand>
        <name>L-ornithine</name>
        <dbReference type="ChEBI" id="CHEBI:46911"/>
    </ligand>
</feature>
<feature type="binding site" evidence="2">
    <location>
        <begin position="236"/>
        <end position="237"/>
    </location>
    <ligand>
        <name>L-ornithine</name>
        <dbReference type="ChEBI" id="CHEBI:46911"/>
    </ligand>
</feature>
<feature type="binding site" evidence="2">
    <location>
        <begin position="273"/>
        <end position="274"/>
    </location>
    <ligand>
        <name>carbamoyl phosphate</name>
        <dbReference type="ChEBI" id="CHEBI:58228"/>
    </ligand>
</feature>
<feature type="binding site" evidence="2">
    <location>
        <position position="318"/>
    </location>
    <ligand>
        <name>carbamoyl phosphate</name>
        <dbReference type="ChEBI" id="CHEBI:58228"/>
    </ligand>
</feature>
<evidence type="ECO:0000250" key="1"/>
<evidence type="ECO:0000255" key="2">
    <source>
        <dbReference type="HAMAP-Rule" id="MF_01109"/>
    </source>
</evidence>
<organism>
    <name type="scientific">Streptococcus pneumoniae serotype 4 (strain ATCC BAA-334 / TIGR4)</name>
    <dbReference type="NCBI Taxonomy" id="170187"/>
    <lineage>
        <taxon>Bacteria</taxon>
        <taxon>Bacillati</taxon>
        <taxon>Bacillota</taxon>
        <taxon>Bacilli</taxon>
        <taxon>Lactobacillales</taxon>
        <taxon>Streptococcaceae</taxon>
        <taxon>Streptococcus</taxon>
    </lineage>
</organism>
<proteinExistence type="inferred from homology"/>
<reference key="1">
    <citation type="journal article" date="2001" name="Science">
        <title>Complete genome sequence of a virulent isolate of Streptococcus pneumoniae.</title>
        <authorList>
            <person name="Tettelin H."/>
            <person name="Nelson K.E."/>
            <person name="Paulsen I.T."/>
            <person name="Eisen J.A."/>
            <person name="Read T.D."/>
            <person name="Peterson S.N."/>
            <person name="Heidelberg J.F."/>
            <person name="DeBoy R.T."/>
            <person name="Haft D.H."/>
            <person name="Dodson R.J."/>
            <person name="Durkin A.S."/>
            <person name="Gwinn M.L."/>
            <person name="Kolonay J.F."/>
            <person name="Nelson W.C."/>
            <person name="Peterson J.D."/>
            <person name="Umayam L.A."/>
            <person name="White O."/>
            <person name="Salzberg S.L."/>
            <person name="Lewis M.R."/>
            <person name="Radune D."/>
            <person name="Holtzapple E.K."/>
            <person name="Khouri H.M."/>
            <person name="Wolf A.M."/>
            <person name="Utterback T.R."/>
            <person name="Hansen C.L."/>
            <person name="McDonald L.A."/>
            <person name="Feldblyum T.V."/>
            <person name="Angiuoli S.V."/>
            <person name="Dickinson T."/>
            <person name="Hickey E.K."/>
            <person name="Holt I.E."/>
            <person name="Loftus B.J."/>
            <person name="Yang F."/>
            <person name="Smith H.O."/>
            <person name="Venter J.C."/>
            <person name="Dougherty B.A."/>
            <person name="Morrison D.A."/>
            <person name="Hollingshead S.K."/>
            <person name="Fraser C.M."/>
        </authorList>
    </citation>
    <scope>NUCLEOTIDE SEQUENCE [LARGE SCALE GENOMIC DNA]</scope>
    <source>
        <strain>ATCC BAA-334 / TIGR4</strain>
    </source>
</reference>
<protein>
    <recommendedName>
        <fullName evidence="2">Ornithine carbamoyltransferase, catabolic</fullName>
        <shortName evidence="2">OTCase</shortName>
        <ecNumber evidence="2">2.1.3.3</ecNumber>
    </recommendedName>
</protein>
<keyword id="KW-0056">Arginine metabolism</keyword>
<keyword id="KW-0963">Cytoplasm</keyword>
<keyword id="KW-1185">Reference proteome</keyword>
<keyword id="KW-0808">Transferase</keyword>
<comment type="function">
    <text evidence="1">Reversibly catalyzes the transfer of the carbamoyl group from carbamoyl phosphate (CP) to the N(epsilon) atom of ornithine (ORN) to produce L-citrulline.</text>
</comment>
<comment type="catalytic activity">
    <reaction evidence="2">
        <text>carbamoyl phosphate + L-ornithine = L-citrulline + phosphate + H(+)</text>
        <dbReference type="Rhea" id="RHEA:19513"/>
        <dbReference type="ChEBI" id="CHEBI:15378"/>
        <dbReference type="ChEBI" id="CHEBI:43474"/>
        <dbReference type="ChEBI" id="CHEBI:46911"/>
        <dbReference type="ChEBI" id="CHEBI:57743"/>
        <dbReference type="ChEBI" id="CHEBI:58228"/>
        <dbReference type="EC" id="2.1.3.3"/>
    </reaction>
</comment>
<comment type="pathway">
    <text evidence="2">Amino-acid degradation; L-arginine degradation via ADI pathway; carbamoyl phosphate from L-arginine: step 2/2.</text>
</comment>
<comment type="subcellular location">
    <subcellularLocation>
        <location evidence="2">Cytoplasm</location>
    </subcellularLocation>
</comment>
<comment type="similarity">
    <text evidence="2">Belongs to the aspartate/ornithine carbamoyltransferase superfamily. OTCase family.</text>
</comment>